<accession>B9DPU4</accession>
<gene>
    <name evidence="1" type="primary">tmcAL</name>
    <name type="ordered locus">Sca_0752</name>
</gene>
<keyword id="KW-0067">ATP-binding</keyword>
<keyword id="KW-0963">Cytoplasm</keyword>
<keyword id="KW-0436">Ligase</keyword>
<keyword id="KW-0547">Nucleotide-binding</keyword>
<keyword id="KW-1185">Reference proteome</keyword>
<keyword id="KW-0694">RNA-binding</keyword>
<keyword id="KW-0819">tRNA processing</keyword>
<keyword id="KW-0820">tRNA-binding</keyword>
<organism>
    <name type="scientific">Staphylococcus carnosus (strain TM300)</name>
    <dbReference type="NCBI Taxonomy" id="396513"/>
    <lineage>
        <taxon>Bacteria</taxon>
        <taxon>Bacillati</taxon>
        <taxon>Bacillota</taxon>
        <taxon>Bacilli</taxon>
        <taxon>Bacillales</taxon>
        <taxon>Staphylococcaceae</taxon>
        <taxon>Staphylococcus</taxon>
    </lineage>
</organism>
<sequence length="382" mass="43629">MKCAALITEYNPFHNGHVYHAQQARQIADADVTIAIMSGQFVMRGEPAVYNKFIRTQMALSTCDLVVELPAYAALSAGEYFAEFGVKVADYMNADALVFGSESGSIQAFEELALQINHIEEHPEFQIKLREGKSYPRIISELLGEPPLLQTPNNILGLSYVQAILKSAPTIQPFSIQRHKTEHHNQAISDNHFASGTAIRHALNTEDKMWEQVVPNSIHELYAKPHMNTNQLFPYLKYKILSTSSDDLRAIHTISEGFEHRLKSSISTSDNFEQLMNQLKTKRYTYTRIQRMLMNVLLNFKQQDKPTTLNAVRILGMNETGQRYLKQLKQDFPERRFITNVNKTTAPYFKPEIKATEIYNLISGQTQTDFNTPVIRVKNKEK</sequence>
<feature type="chain" id="PRO_1000185220" description="tRNA(Met) cytidine acetate ligase">
    <location>
        <begin position="1"/>
        <end position="382"/>
    </location>
</feature>
<feature type="binding site" evidence="1">
    <location>
        <begin position="7"/>
        <end position="20"/>
    </location>
    <ligand>
        <name>ATP</name>
        <dbReference type="ChEBI" id="CHEBI:30616"/>
    </ligand>
</feature>
<feature type="binding site" evidence="1">
    <location>
        <position position="100"/>
    </location>
    <ligand>
        <name>ATP</name>
        <dbReference type="ChEBI" id="CHEBI:30616"/>
    </ligand>
</feature>
<feature type="binding site" evidence="1">
    <location>
        <position position="153"/>
    </location>
    <ligand>
        <name>ATP</name>
        <dbReference type="ChEBI" id="CHEBI:30616"/>
    </ligand>
</feature>
<feature type="binding site" evidence="1">
    <location>
        <position position="178"/>
    </location>
    <ligand>
        <name>ATP</name>
        <dbReference type="ChEBI" id="CHEBI:30616"/>
    </ligand>
</feature>
<dbReference type="EC" id="6.3.4.-" evidence="1"/>
<dbReference type="EMBL" id="AM295250">
    <property type="protein sequence ID" value="CAL27662.1"/>
    <property type="molecule type" value="Genomic_DNA"/>
</dbReference>
<dbReference type="RefSeq" id="WP_015900004.1">
    <property type="nucleotide sequence ID" value="NC_012121.1"/>
</dbReference>
<dbReference type="SMR" id="B9DPU4"/>
<dbReference type="GeneID" id="93795689"/>
<dbReference type="KEGG" id="sca:SCA_0752"/>
<dbReference type="eggNOG" id="COG1323">
    <property type="taxonomic scope" value="Bacteria"/>
</dbReference>
<dbReference type="HOGENOM" id="CLU_038915_0_2_9"/>
<dbReference type="OrthoDB" id="9769796at2"/>
<dbReference type="BioCyc" id="SCAR396513:SCA_RS03810-MONOMER"/>
<dbReference type="Proteomes" id="UP000000444">
    <property type="component" value="Chromosome"/>
</dbReference>
<dbReference type="GO" id="GO:0005737">
    <property type="term" value="C:cytoplasm"/>
    <property type="evidence" value="ECO:0007669"/>
    <property type="project" value="UniProtKB-SubCell"/>
</dbReference>
<dbReference type="GO" id="GO:0005524">
    <property type="term" value="F:ATP binding"/>
    <property type="evidence" value="ECO:0007669"/>
    <property type="project" value="UniProtKB-KW"/>
</dbReference>
<dbReference type="GO" id="GO:0016879">
    <property type="term" value="F:ligase activity, forming carbon-nitrogen bonds"/>
    <property type="evidence" value="ECO:0007669"/>
    <property type="project" value="UniProtKB-UniRule"/>
</dbReference>
<dbReference type="GO" id="GO:0000049">
    <property type="term" value="F:tRNA binding"/>
    <property type="evidence" value="ECO:0007669"/>
    <property type="project" value="UniProtKB-KW"/>
</dbReference>
<dbReference type="GO" id="GO:0006400">
    <property type="term" value="P:tRNA modification"/>
    <property type="evidence" value="ECO:0007669"/>
    <property type="project" value="UniProtKB-UniRule"/>
</dbReference>
<dbReference type="Gene3D" id="3.40.50.620">
    <property type="entry name" value="HUPs"/>
    <property type="match status" value="1"/>
</dbReference>
<dbReference type="HAMAP" id="MF_01539">
    <property type="entry name" value="TmcAL"/>
    <property type="match status" value="1"/>
</dbReference>
<dbReference type="InterPro" id="IPR004821">
    <property type="entry name" value="Cyt_trans-like"/>
</dbReference>
<dbReference type="InterPro" id="IPR014729">
    <property type="entry name" value="Rossmann-like_a/b/a_fold"/>
</dbReference>
<dbReference type="InterPro" id="IPR008513">
    <property type="entry name" value="tRNA(Met)_cyd_acetate_ligase"/>
</dbReference>
<dbReference type="NCBIfam" id="TIGR00125">
    <property type="entry name" value="cyt_tran_rel"/>
    <property type="match status" value="1"/>
</dbReference>
<dbReference type="NCBIfam" id="NF010191">
    <property type="entry name" value="PRK13670.1"/>
    <property type="match status" value="1"/>
</dbReference>
<dbReference type="PANTHER" id="PTHR37825">
    <property type="entry name" value="TRNA(MET) CYTIDINE ACETATE LIGASE"/>
    <property type="match status" value="1"/>
</dbReference>
<dbReference type="PANTHER" id="PTHR37825:SF1">
    <property type="entry name" value="TRNA(MET) CYTIDINE ACETATE LIGASE"/>
    <property type="match status" value="1"/>
</dbReference>
<dbReference type="Pfam" id="PF05636">
    <property type="entry name" value="HIGH_NTase1"/>
    <property type="match status" value="1"/>
</dbReference>
<dbReference type="SUPFAM" id="SSF52374">
    <property type="entry name" value="Nucleotidylyl transferase"/>
    <property type="match status" value="1"/>
</dbReference>
<protein>
    <recommendedName>
        <fullName evidence="1">tRNA(Met) cytidine acetate ligase</fullName>
        <ecNumber evidence="1">6.3.4.-</ecNumber>
    </recommendedName>
</protein>
<comment type="function">
    <text evidence="1">Catalyzes the formation of N(4)-acetylcytidine (ac(4)C) at the wobble position of elongator tRNA(Met), using acetate and ATP as substrates. First activates an acetate ion to form acetyladenylate (Ac-AMP) and then transfers the acetyl group to tRNA to form ac(4)C34.</text>
</comment>
<comment type="catalytic activity">
    <reaction evidence="1">
        <text>cytidine(34) in elongator tRNA(Met) + acetate + ATP = N(4)-acetylcytidine(34) in elongator tRNA(Met) + AMP + diphosphate</text>
        <dbReference type="Rhea" id="RHEA:58144"/>
        <dbReference type="Rhea" id="RHEA-COMP:10693"/>
        <dbReference type="Rhea" id="RHEA-COMP:10694"/>
        <dbReference type="ChEBI" id="CHEBI:30089"/>
        <dbReference type="ChEBI" id="CHEBI:30616"/>
        <dbReference type="ChEBI" id="CHEBI:33019"/>
        <dbReference type="ChEBI" id="CHEBI:74900"/>
        <dbReference type="ChEBI" id="CHEBI:82748"/>
        <dbReference type="ChEBI" id="CHEBI:456215"/>
    </reaction>
</comment>
<comment type="subcellular location">
    <subcellularLocation>
        <location evidence="1">Cytoplasm</location>
    </subcellularLocation>
</comment>
<comment type="similarity">
    <text evidence="1">Belongs to the TmcAL family.</text>
</comment>
<proteinExistence type="inferred from homology"/>
<name>TMCAL_STACT</name>
<evidence type="ECO:0000255" key="1">
    <source>
        <dbReference type="HAMAP-Rule" id="MF_01539"/>
    </source>
</evidence>
<reference key="1">
    <citation type="journal article" date="2009" name="Appl. Environ. Microbiol.">
        <title>Genome analysis of the meat starter culture bacterium Staphylococcus carnosus TM300.</title>
        <authorList>
            <person name="Rosenstein R."/>
            <person name="Nerz C."/>
            <person name="Biswas L."/>
            <person name="Resch A."/>
            <person name="Raddatz G."/>
            <person name="Schuster S.C."/>
            <person name="Goetz F."/>
        </authorList>
    </citation>
    <scope>NUCLEOTIDE SEQUENCE [LARGE SCALE GENOMIC DNA]</scope>
    <source>
        <strain>TM300</strain>
    </source>
</reference>